<dbReference type="EC" id="2.7.7.7" evidence="1"/>
<dbReference type="EMBL" id="AE005674">
    <property type="protein sequence ID" value="AAN41938.1"/>
    <property type="molecule type" value="Genomic_DNA"/>
</dbReference>
<dbReference type="EMBL" id="AE014073">
    <property type="protein sequence ID" value="AAP15825.1"/>
    <property type="molecule type" value="Genomic_DNA"/>
</dbReference>
<dbReference type="RefSeq" id="WP_001226172.1">
    <property type="nucleotide sequence ID" value="NZ_WPGW01000070.1"/>
</dbReference>
<dbReference type="SMR" id="Q83M86"/>
<dbReference type="STRING" id="198214.SF0279"/>
<dbReference type="PaxDb" id="198214-SF0279"/>
<dbReference type="KEGG" id="sfl:SF0279"/>
<dbReference type="KEGG" id="sfx:S0300"/>
<dbReference type="PATRIC" id="fig|198214.7.peg.319"/>
<dbReference type="HOGENOM" id="CLU_012348_1_2_6"/>
<dbReference type="Proteomes" id="UP000001006">
    <property type="component" value="Chromosome"/>
</dbReference>
<dbReference type="Proteomes" id="UP000002673">
    <property type="component" value="Chromosome"/>
</dbReference>
<dbReference type="GO" id="GO:0005829">
    <property type="term" value="C:cytosol"/>
    <property type="evidence" value="ECO:0007669"/>
    <property type="project" value="TreeGrafter"/>
</dbReference>
<dbReference type="GO" id="GO:0003684">
    <property type="term" value="F:damaged DNA binding"/>
    <property type="evidence" value="ECO:0007669"/>
    <property type="project" value="InterPro"/>
</dbReference>
<dbReference type="GO" id="GO:0003887">
    <property type="term" value="F:DNA-directed DNA polymerase activity"/>
    <property type="evidence" value="ECO:0007669"/>
    <property type="project" value="UniProtKB-UniRule"/>
</dbReference>
<dbReference type="GO" id="GO:0000287">
    <property type="term" value="F:magnesium ion binding"/>
    <property type="evidence" value="ECO:0007669"/>
    <property type="project" value="UniProtKB-UniRule"/>
</dbReference>
<dbReference type="GO" id="GO:0006261">
    <property type="term" value="P:DNA-templated DNA replication"/>
    <property type="evidence" value="ECO:0007669"/>
    <property type="project" value="UniProtKB-UniRule"/>
</dbReference>
<dbReference type="GO" id="GO:0042276">
    <property type="term" value="P:error-prone translesion synthesis"/>
    <property type="evidence" value="ECO:0007669"/>
    <property type="project" value="TreeGrafter"/>
</dbReference>
<dbReference type="GO" id="GO:0009432">
    <property type="term" value="P:SOS response"/>
    <property type="evidence" value="ECO:0007669"/>
    <property type="project" value="TreeGrafter"/>
</dbReference>
<dbReference type="CDD" id="cd03586">
    <property type="entry name" value="PolY_Pol_IV_kappa"/>
    <property type="match status" value="1"/>
</dbReference>
<dbReference type="FunFam" id="1.10.150.20:FF:000019">
    <property type="entry name" value="DNA polymerase IV"/>
    <property type="match status" value="1"/>
</dbReference>
<dbReference type="FunFam" id="3.30.1490.100:FF:000002">
    <property type="entry name" value="DNA polymerase IV"/>
    <property type="match status" value="1"/>
</dbReference>
<dbReference type="FunFam" id="3.30.70.270:FF:000002">
    <property type="entry name" value="DNA polymerase IV"/>
    <property type="match status" value="1"/>
</dbReference>
<dbReference type="FunFam" id="3.40.1170.60:FF:000001">
    <property type="entry name" value="DNA polymerase IV"/>
    <property type="match status" value="1"/>
</dbReference>
<dbReference type="Gene3D" id="3.30.70.270">
    <property type="match status" value="1"/>
</dbReference>
<dbReference type="Gene3D" id="3.40.1170.60">
    <property type="match status" value="1"/>
</dbReference>
<dbReference type="Gene3D" id="1.10.150.20">
    <property type="entry name" value="5' to 3' exonuclease, C-terminal subdomain"/>
    <property type="match status" value="1"/>
</dbReference>
<dbReference type="Gene3D" id="3.30.1490.100">
    <property type="entry name" value="DNA polymerase, Y-family, little finger domain"/>
    <property type="match status" value="1"/>
</dbReference>
<dbReference type="HAMAP" id="MF_01113">
    <property type="entry name" value="DNApol_IV"/>
    <property type="match status" value="1"/>
</dbReference>
<dbReference type="InterPro" id="IPR043502">
    <property type="entry name" value="DNA/RNA_pol_sf"/>
</dbReference>
<dbReference type="InterPro" id="IPR036775">
    <property type="entry name" value="DNA_pol_Y-fam_lit_finger_sf"/>
</dbReference>
<dbReference type="InterPro" id="IPR017961">
    <property type="entry name" value="DNA_pol_Y-fam_little_finger"/>
</dbReference>
<dbReference type="InterPro" id="IPR050116">
    <property type="entry name" value="DNA_polymerase-Y"/>
</dbReference>
<dbReference type="InterPro" id="IPR022880">
    <property type="entry name" value="DNApol_IV"/>
</dbReference>
<dbReference type="InterPro" id="IPR053848">
    <property type="entry name" value="IMS_HHH_1"/>
</dbReference>
<dbReference type="InterPro" id="IPR043128">
    <property type="entry name" value="Rev_trsase/Diguanyl_cyclase"/>
</dbReference>
<dbReference type="InterPro" id="IPR001126">
    <property type="entry name" value="UmuC"/>
</dbReference>
<dbReference type="NCBIfam" id="NF002677">
    <property type="entry name" value="PRK02406.1"/>
    <property type="match status" value="1"/>
</dbReference>
<dbReference type="PANTHER" id="PTHR11076:SF33">
    <property type="entry name" value="DNA POLYMERASE KAPPA"/>
    <property type="match status" value="1"/>
</dbReference>
<dbReference type="PANTHER" id="PTHR11076">
    <property type="entry name" value="DNA REPAIR POLYMERASE UMUC / TRANSFERASE FAMILY MEMBER"/>
    <property type="match status" value="1"/>
</dbReference>
<dbReference type="Pfam" id="PF00817">
    <property type="entry name" value="IMS"/>
    <property type="match status" value="1"/>
</dbReference>
<dbReference type="Pfam" id="PF11799">
    <property type="entry name" value="IMS_C"/>
    <property type="match status" value="1"/>
</dbReference>
<dbReference type="Pfam" id="PF21999">
    <property type="entry name" value="IMS_HHH_1"/>
    <property type="match status" value="1"/>
</dbReference>
<dbReference type="SUPFAM" id="SSF56672">
    <property type="entry name" value="DNA/RNA polymerases"/>
    <property type="match status" value="1"/>
</dbReference>
<dbReference type="SUPFAM" id="SSF100879">
    <property type="entry name" value="Lesion bypass DNA polymerase (Y-family), little finger domain"/>
    <property type="match status" value="1"/>
</dbReference>
<dbReference type="PROSITE" id="PS50173">
    <property type="entry name" value="UMUC"/>
    <property type="match status" value="1"/>
</dbReference>
<protein>
    <recommendedName>
        <fullName evidence="1">DNA polymerase IV</fullName>
        <shortName evidence="1">Pol IV</shortName>
        <ecNumber evidence="1">2.7.7.7</ecNumber>
    </recommendedName>
</protein>
<evidence type="ECO:0000255" key="1">
    <source>
        <dbReference type="HAMAP-Rule" id="MF_01113"/>
    </source>
</evidence>
<feature type="chain" id="PRO_1000084941" description="DNA polymerase IV">
    <location>
        <begin position="1"/>
        <end position="351"/>
    </location>
</feature>
<feature type="domain" description="UmuC" evidence="1">
    <location>
        <begin position="4"/>
        <end position="185"/>
    </location>
</feature>
<feature type="active site" evidence="1">
    <location>
        <position position="104"/>
    </location>
</feature>
<feature type="binding site" evidence="1">
    <location>
        <position position="8"/>
    </location>
    <ligand>
        <name>Mg(2+)</name>
        <dbReference type="ChEBI" id="CHEBI:18420"/>
    </ligand>
</feature>
<feature type="binding site" evidence="1">
    <location>
        <position position="103"/>
    </location>
    <ligand>
        <name>Mg(2+)</name>
        <dbReference type="ChEBI" id="CHEBI:18420"/>
    </ligand>
</feature>
<feature type="site" description="Substrate discrimination" evidence="1">
    <location>
        <position position="13"/>
    </location>
</feature>
<reference key="1">
    <citation type="journal article" date="2002" name="Nucleic Acids Res.">
        <title>Genome sequence of Shigella flexneri 2a: insights into pathogenicity through comparison with genomes of Escherichia coli K12 and O157.</title>
        <authorList>
            <person name="Jin Q."/>
            <person name="Yuan Z."/>
            <person name="Xu J."/>
            <person name="Wang Y."/>
            <person name="Shen Y."/>
            <person name="Lu W."/>
            <person name="Wang J."/>
            <person name="Liu H."/>
            <person name="Yang J."/>
            <person name="Yang F."/>
            <person name="Zhang X."/>
            <person name="Zhang J."/>
            <person name="Yang G."/>
            <person name="Wu H."/>
            <person name="Qu D."/>
            <person name="Dong J."/>
            <person name="Sun L."/>
            <person name="Xue Y."/>
            <person name="Zhao A."/>
            <person name="Gao Y."/>
            <person name="Zhu J."/>
            <person name="Kan B."/>
            <person name="Ding K."/>
            <person name="Chen S."/>
            <person name="Cheng H."/>
            <person name="Yao Z."/>
            <person name="He B."/>
            <person name="Chen R."/>
            <person name="Ma D."/>
            <person name="Qiang B."/>
            <person name="Wen Y."/>
            <person name="Hou Y."/>
            <person name="Yu J."/>
        </authorList>
    </citation>
    <scope>NUCLEOTIDE SEQUENCE [LARGE SCALE GENOMIC DNA]</scope>
    <source>
        <strain>301 / Serotype 2a</strain>
    </source>
</reference>
<reference key="2">
    <citation type="journal article" date="2003" name="Infect. Immun.">
        <title>Complete genome sequence and comparative genomics of Shigella flexneri serotype 2a strain 2457T.</title>
        <authorList>
            <person name="Wei J."/>
            <person name="Goldberg M.B."/>
            <person name="Burland V."/>
            <person name="Venkatesan M.M."/>
            <person name="Deng W."/>
            <person name="Fournier G."/>
            <person name="Mayhew G.F."/>
            <person name="Plunkett G. III"/>
            <person name="Rose D.J."/>
            <person name="Darling A."/>
            <person name="Mau B."/>
            <person name="Perna N.T."/>
            <person name="Payne S.M."/>
            <person name="Runyen-Janecky L.J."/>
            <person name="Zhou S."/>
            <person name="Schwartz D.C."/>
            <person name="Blattner F.R."/>
        </authorList>
    </citation>
    <scope>NUCLEOTIDE SEQUENCE [LARGE SCALE GENOMIC DNA]</scope>
    <source>
        <strain>ATCC 700930 / 2457T / Serotype 2a</strain>
    </source>
</reference>
<sequence>MRKIIHVDMDCFFAAVEMRDNPALRDIPIAIGGSRERRGVISTANYPARKFGVRSAMPTGMALKLCPHLTLLPGRFDAYKEASNHIREIFSRYTSRIEPLSLDEAYLDVTDSVHCHGSATLIAQEIRQTIFNELQLTASAGVAPVKFLAKIASDMNKPNGQFVITPAEVPAFLQTLPLEKIPGVGKVSAAKLEAMGLRTCGDVQKCDLVILLKRFGKFGRILWERSQGIDERDVNSERLRKSVGVERTMAEDIHHWSECEAIIERLYPELERRLAKVKPDLLIARQGVKLKFDDFQQTTQEHVWPRLNKADLIATARKTWDERRGGRGVRLVGLHVTLLDPQMERQLVLGL</sequence>
<organism>
    <name type="scientific">Shigella flexneri</name>
    <dbReference type="NCBI Taxonomy" id="623"/>
    <lineage>
        <taxon>Bacteria</taxon>
        <taxon>Pseudomonadati</taxon>
        <taxon>Pseudomonadota</taxon>
        <taxon>Gammaproteobacteria</taxon>
        <taxon>Enterobacterales</taxon>
        <taxon>Enterobacteriaceae</taxon>
        <taxon>Shigella</taxon>
    </lineage>
</organism>
<comment type="function">
    <text evidence="1">Poorly processive, error-prone DNA polymerase involved in untargeted mutagenesis. Copies undamaged DNA at stalled replication forks, which arise in vivo from mismatched or misaligned primer ends. These misaligned primers can be extended by PolIV. Exhibits no 3'-5' exonuclease (proofreading) activity. May be involved in translesional synthesis, in conjunction with the beta clamp from PolIII.</text>
</comment>
<comment type="catalytic activity">
    <reaction evidence="1">
        <text>DNA(n) + a 2'-deoxyribonucleoside 5'-triphosphate = DNA(n+1) + diphosphate</text>
        <dbReference type="Rhea" id="RHEA:22508"/>
        <dbReference type="Rhea" id="RHEA-COMP:17339"/>
        <dbReference type="Rhea" id="RHEA-COMP:17340"/>
        <dbReference type="ChEBI" id="CHEBI:33019"/>
        <dbReference type="ChEBI" id="CHEBI:61560"/>
        <dbReference type="ChEBI" id="CHEBI:173112"/>
        <dbReference type="EC" id="2.7.7.7"/>
    </reaction>
</comment>
<comment type="cofactor">
    <cofactor evidence="1">
        <name>Mg(2+)</name>
        <dbReference type="ChEBI" id="CHEBI:18420"/>
    </cofactor>
    <text evidence="1">Binds 2 magnesium ions per subunit.</text>
</comment>
<comment type="subunit">
    <text evidence="1">Monomer.</text>
</comment>
<comment type="subcellular location">
    <subcellularLocation>
        <location evidence="1">Cytoplasm</location>
    </subcellularLocation>
</comment>
<comment type="similarity">
    <text evidence="1">Belongs to the DNA polymerase type-Y family.</text>
</comment>
<accession>Q83M86</accession>
<accession>Q7C317</accession>
<keyword id="KW-0963">Cytoplasm</keyword>
<keyword id="KW-0227">DNA damage</keyword>
<keyword id="KW-0234">DNA repair</keyword>
<keyword id="KW-0235">DNA replication</keyword>
<keyword id="KW-0238">DNA-binding</keyword>
<keyword id="KW-0239">DNA-directed DNA polymerase</keyword>
<keyword id="KW-0460">Magnesium</keyword>
<keyword id="KW-0479">Metal-binding</keyword>
<keyword id="KW-0515">Mutator protein</keyword>
<keyword id="KW-0548">Nucleotidyltransferase</keyword>
<keyword id="KW-1185">Reference proteome</keyword>
<keyword id="KW-0808">Transferase</keyword>
<proteinExistence type="inferred from homology"/>
<name>DPO4_SHIFL</name>
<gene>
    <name evidence="1" type="primary">dinB</name>
    <name type="ordered locus">SF0279</name>
    <name type="ordered locus">S0300</name>
</gene>